<reference key="1">
    <citation type="journal article" date="2005" name="Curr. Biol.">
        <title>A divergent cellular role for the FUSED kinase family in the plant-specific cytokinetic phragmoplast.</title>
        <authorList>
            <person name="Oh S.A."/>
            <person name="Johnson A."/>
            <person name="Smertenko A."/>
            <person name="Rahman D."/>
            <person name="Park S.K."/>
            <person name="Hussey P.J."/>
            <person name="Twell D."/>
        </authorList>
    </citation>
    <scope>NUCLEOTIDE SEQUENCE [GENOMIC DNA / MRNA]</scope>
    <scope>FUNCTION</scope>
    <scope>DISRUPTION PHENOTYPE</scope>
    <scope>SUBCELLULAR LOCATION</scope>
    <scope>TISSUE SPECIFICITY</scope>
    <source>
        <strain>cv. Columbia</strain>
    </source>
</reference>
<reference key="2">
    <citation type="journal article" date="2000" name="Nature">
        <title>Sequence and analysis of chromosome 1 of the plant Arabidopsis thaliana.</title>
        <authorList>
            <person name="Theologis A."/>
            <person name="Ecker J.R."/>
            <person name="Palm C.J."/>
            <person name="Federspiel N.A."/>
            <person name="Kaul S."/>
            <person name="White O."/>
            <person name="Alonso J."/>
            <person name="Altafi H."/>
            <person name="Araujo R."/>
            <person name="Bowman C.L."/>
            <person name="Brooks S.Y."/>
            <person name="Buehler E."/>
            <person name="Chan A."/>
            <person name="Chao Q."/>
            <person name="Chen H."/>
            <person name="Cheuk R.F."/>
            <person name="Chin C.W."/>
            <person name="Chung M.K."/>
            <person name="Conn L."/>
            <person name="Conway A.B."/>
            <person name="Conway A.R."/>
            <person name="Creasy T.H."/>
            <person name="Dewar K."/>
            <person name="Dunn P."/>
            <person name="Etgu P."/>
            <person name="Feldblyum T.V."/>
            <person name="Feng J.-D."/>
            <person name="Fong B."/>
            <person name="Fujii C.Y."/>
            <person name="Gill J.E."/>
            <person name="Goldsmith A.D."/>
            <person name="Haas B."/>
            <person name="Hansen N.F."/>
            <person name="Hughes B."/>
            <person name="Huizar L."/>
            <person name="Hunter J.L."/>
            <person name="Jenkins J."/>
            <person name="Johnson-Hopson C."/>
            <person name="Khan S."/>
            <person name="Khaykin E."/>
            <person name="Kim C.J."/>
            <person name="Koo H.L."/>
            <person name="Kremenetskaia I."/>
            <person name="Kurtz D.B."/>
            <person name="Kwan A."/>
            <person name="Lam B."/>
            <person name="Langin-Hooper S."/>
            <person name="Lee A."/>
            <person name="Lee J.M."/>
            <person name="Lenz C.A."/>
            <person name="Li J.H."/>
            <person name="Li Y.-P."/>
            <person name="Lin X."/>
            <person name="Liu S.X."/>
            <person name="Liu Z.A."/>
            <person name="Luros J.S."/>
            <person name="Maiti R."/>
            <person name="Marziali A."/>
            <person name="Militscher J."/>
            <person name="Miranda M."/>
            <person name="Nguyen M."/>
            <person name="Nierman W.C."/>
            <person name="Osborne B.I."/>
            <person name="Pai G."/>
            <person name="Peterson J."/>
            <person name="Pham P.K."/>
            <person name="Rizzo M."/>
            <person name="Rooney T."/>
            <person name="Rowley D."/>
            <person name="Sakano H."/>
            <person name="Salzberg S.L."/>
            <person name="Schwartz J.R."/>
            <person name="Shinn P."/>
            <person name="Southwick A.M."/>
            <person name="Sun H."/>
            <person name="Tallon L.J."/>
            <person name="Tambunga G."/>
            <person name="Toriumi M.J."/>
            <person name="Town C.D."/>
            <person name="Utterback T."/>
            <person name="Van Aken S."/>
            <person name="Vaysberg M."/>
            <person name="Vysotskaia V.S."/>
            <person name="Walker M."/>
            <person name="Wu D."/>
            <person name="Yu G."/>
            <person name="Fraser C.M."/>
            <person name="Venter J.C."/>
            <person name="Davis R.W."/>
        </authorList>
    </citation>
    <scope>NUCLEOTIDE SEQUENCE [LARGE SCALE GENOMIC DNA]</scope>
    <source>
        <strain>cv. Columbia</strain>
    </source>
</reference>
<reference key="3">
    <citation type="journal article" date="2017" name="Plant J.">
        <title>Araport11: a complete reannotation of the Arabidopsis thaliana reference genome.</title>
        <authorList>
            <person name="Cheng C.Y."/>
            <person name="Krishnakumar V."/>
            <person name="Chan A.P."/>
            <person name="Thibaud-Nissen F."/>
            <person name="Schobel S."/>
            <person name="Town C.D."/>
        </authorList>
    </citation>
    <scope>GENOME REANNOTATION</scope>
    <source>
        <strain>cv. Columbia</strain>
    </source>
</reference>
<reference key="4">
    <citation type="journal article" date="2012" name="Plant J.">
        <title>Arabidopsis Fused kinase and the Kinesin-12 subfamily constitute a signalling module required for phragmoplast expansion.</title>
        <authorList>
            <person name="Oh S.A."/>
            <person name="Allen T."/>
            <person name="Kim G.J."/>
            <person name="Sidorova A."/>
            <person name="Borg M."/>
            <person name="Park S.K."/>
            <person name="Twell D."/>
        </authorList>
    </citation>
    <scope>FUNCTION</scope>
    <scope>DISRUPTION PHENOTYPE</scope>
    <scope>DOMAIN</scope>
    <scope>INTERACTION WITH KIN12A AND KIN12B</scope>
    <scope>MUTAGENESIS OF LYS-35; ASP-127 AND ASN-132</scope>
</reference>
<reference key="5">
    <citation type="journal article" date="2014" name="Plant Reprod.">
        <title>Arabidopsis Fused kinase TWO-IN-ONE dominantly inhibits male meiotic cytokinesis.</title>
        <authorList>
            <person name="Oh S.A."/>
            <person name="Bourdon V."/>
            <person name="Dickinson H.G."/>
            <person name="Twell D."/>
            <person name="Park S.K."/>
        </authorList>
    </citation>
    <scope>INTERACTION WITH KIN7B/NACK2</scope>
</reference>
<evidence type="ECO:0000255" key="1">
    <source>
        <dbReference type="PROSITE-ProRule" id="PRU00159"/>
    </source>
</evidence>
<evidence type="ECO:0000255" key="2">
    <source>
        <dbReference type="PROSITE-ProRule" id="PRU10027"/>
    </source>
</evidence>
<evidence type="ECO:0000269" key="3">
    <source>
    </source>
</evidence>
<evidence type="ECO:0000269" key="4">
    <source>
    </source>
</evidence>
<evidence type="ECO:0000269" key="5">
    <source>
    </source>
</evidence>
<evidence type="ECO:0000305" key="6"/>
<protein>
    <recommendedName>
        <fullName>Serine/threonine-protein kinase TIO</fullName>
        <ecNumber>2.7.11.1</ecNumber>
    </recommendedName>
    <alternativeName>
        <fullName>Fused homolog</fullName>
        <shortName>AtFUSED</shortName>
    </alternativeName>
    <alternativeName>
        <fullName>Protein TWO-IN-ONE</fullName>
        <shortName>AtTIO</shortName>
    </alternativeName>
</protein>
<name>TIO_ARATH</name>
<organism>
    <name type="scientific">Arabidopsis thaliana</name>
    <name type="common">Mouse-ear cress</name>
    <dbReference type="NCBI Taxonomy" id="3702"/>
    <lineage>
        <taxon>Eukaryota</taxon>
        <taxon>Viridiplantae</taxon>
        <taxon>Streptophyta</taxon>
        <taxon>Embryophyta</taxon>
        <taxon>Tracheophyta</taxon>
        <taxon>Spermatophyta</taxon>
        <taxon>Magnoliopsida</taxon>
        <taxon>eudicotyledons</taxon>
        <taxon>Gunneridae</taxon>
        <taxon>Pentapetalae</taxon>
        <taxon>rosids</taxon>
        <taxon>malvids</taxon>
        <taxon>Brassicales</taxon>
        <taxon>Brassicaceae</taxon>
        <taxon>Camelineae</taxon>
        <taxon>Arabidopsis</taxon>
    </lineage>
</organism>
<dbReference type="EC" id="2.7.11.1"/>
<dbReference type="EMBL" id="DQ149983">
    <property type="protein sequence ID" value="AAZ66047.1"/>
    <property type="molecule type" value="mRNA"/>
</dbReference>
<dbReference type="EMBL" id="DQ153170">
    <property type="protein sequence ID" value="AAZ66048.1"/>
    <property type="molecule type" value="Genomic_DNA"/>
</dbReference>
<dbReference type="EMBL" id="AC007980">
    <property type="protein sequence ID" value="AAD50043.1"/>
    <property type="status" value="ALT_SEQ"/>
    <property type="molecule type" value="Genomic_DNA"/>
</dbReference>
<dbReference type="EMBL" id="CP002684">
    <property type="protein sequence ID" value="AEE32527.1"/>
    <property type="molecule type" value="Genomic_DNA"/>
</dbReference>
<dbReference type="EMBL" id="CP002684">
    <property type="protein sequence ID" value="ANM58830.1"/>
    <property type="molecule type" value="Genomic_DNA"/>
</dbReference>
<dbReference type="PIR" id="F96538">
    <property type="entry name" value="F96538"/>
</dbReference>
<dbReference type="RefSeq" id="NP_001319189.1">
    <property type="nucleotide sequence ID" value="NM_001333427.1"/>
</dbReference>
<dbReference type="RefSeq" id="NP_001321239.1">
    <property type="nucleotide sequence ID" value="NM_001333428.1"/>
</dbReference>
<dbReference type="SMR" id="Q2QAV0"/>
<dbReference type="BioGRID" id="26671">
    <property type="interactions" value="3"/>
</dbReference>
<dbReference type="FunCoup" id="Q2QAV0">
    <property type="interactions" value="587"/>
</dbReference>
<dbReference type="IntAct" id="Q2QAV0">
    <property type="interactions" value="2"/>
</dbReference>
<dbReference type="STRING" id="3702.Q2QAV0"/>
<dbReference type="iPTMnet" id="Q2QAV0"/>
<dbReference type="PaxDb" id="3702-AT1G50240.2"/>
<dbReference type="ProteomicsDB" id="234317"/>
<dbReference type="EnsemblPlants" id="AT1G50240.2">
    <property type="protein sequence ID" value="AT1G50240.2"/>
    <property type="gene ID" value="AT1G50240"/>
</dbReference>
<dbReference type="EnsemblPlants" id="AT1G50240.3">
    <property type="protein sequence ID" value="AT1G50240.3"/>
    <property type="gene ID" value="AT1G50240"/>
</dbReference>
<dbReference type="GeneID" id="841446"/>
<dbReference type="Gramene" id="AT1G50240.2">
    <property type="protein sequence ID" value="AT1G50240.2"/>
    <property type="gene ID" value="AT1G50240"/>
</dbReference>
<dbReference type="Gramene" id="AT1G50240.3">
    <property type="protein sequence ID" value="AT1G50240.3"/>
    <property type="gene ID" value="AT1G50240"/>
</dbReference>
<dbReference type="KEGG" id="ath:AT1G50240"/>
<dbReference type="Araport" id="AT1G50240"/>
<dbReference type="TAIR" id="AT1G50240">
    <property type="gene designation" value="FU"/>
</dbReference>
<dbReference type="eggNOG" id="KOG0597">
    <property type="taxonomic scope" value="Eukaryota"/>
</dbReference>
<dbReference type="HOGENOM" id="CLU_002453_1_1_1"/>
<dbReference type="InParanoid" id="Q2QAV0"/>
<dbReference type="OMA" id="NSNILCE"/>
<dbReference type="PhylomeDB" id="Q2QAV0"/>
<dbReference type="PRO" id="PR:Q2QAV0"/>
<dbReference type="Proteomes" id="UP000006548">
    <property type="component" value="Chromosome 1"/>
</dbReference>
<dbReference type="ExpressionAtlas" id="Q2QAV0">
    <property type="expression patterns" value="baseline and differential"/>
</dbReference>
<dbReference type="GO" id="GO:0005856">
    <property type="term" value="C:cytoskeleton"/>
    <property type="evidence" value="ECO:0007669"/>
    <property type="project" value="UniProtKB-KW"/>
</dbReference>
<dbReference type="GO" id="GO:0009524">
    <property type="term" value="C:phragmoplast"/>
    <property type="evidence" value="ECO:0000314"/>
    <property type="project" value="UniProtKB"/>
</dbReference>
<dbReference type="GO" id="GO:0005524">
    <property type="term" value="F:ATP binding"/>
    <property type="evidence" value="ECO:0007669"/>
    <property type="project" value="UniProtKB-KW"/>
</dbReference>
<dbReference type="GO" id="GO:0019894">
    <property type="term" value="F:kinesin binding"/>
    <property type="evidence" value="ECO:0000353"/>
    <property type="project" value="TAIR"/>
</dbReference>
<dbReference type="GO" id="GO:0106310">
    <property type="term" value="F:protein serine kinase activity"/>
    <property type="evidence" value="ECO:0007669"/>
    <property type="project" value="RHEA"/>
</dbReference>
<dbReference type="GO" id="GO:0004674">
    <property type="term" value="F:protein serine/threonine kinase activity"/>
    <property type="evidence" value="ECO:0007669"/>
    <property type="project" value="UniProtKB-KW"/>
</dbReference>
<dbReference type="GO" id="GO:0000911">
    <property type="term" value="P:cytokinesis by cell plate formation"/>
    <property type="evidence" value="ECO:0000315"/>
    <property type="project" value="UniProtKB"/>
</dbReference>
<dbReference type="GO" id="GO:0009558">
    <property type="term" value="P:embryo sac cellularization"/>
    <property type="evidence" value="ECO:0000315"/>
    <property type="project" value="TAIR"/>
</dbReference>
<dbReference type="GO" id="GO:0007112">
    <property type="term" value="P:male meiosis cytokinesis"/>
    <property type="evidence" value="ECO:0000315"/>
    <property type="project" value="TAIR"/>
</dbReference>
<dbReference type="CDD" id="cd14002">
    <property type="entry name" value="STKc_STK36"/>
    <property type="match status" value="1"/>
</dbReference>
<dbReference type="FunFam" id="3.30.200.20:FF:000042">
    <property type="entry name" value="Aurora kinase A"/>
    <property type="match status" value="1"/>
</dbReference>
<dbReference type="FunFam" id="1.10.510.10:FF:000292">
    <property type="entry name" value="Serine/threonine-protein kinase 36"/>
    <property type="match status" value="1"/>
</dbReference>
<dbReference type="FunFam" id="1.25.10.10:FF:000223">
    <property type="entry name" value="Serine/threonine-protein kinase TIO"/>
    <property type="match status" value="1"/>
</dbReference>
<dbReference type="Gene3D" id="1.25.10.10">
    <property type="entry name" value="Leucine-rich Repeat Variant"/>
    <property type="match status" value="1"/>
</dbReference>
<dbReference type="Gene3D" id="1.10.510.10">
    <property type="entry name" value="Transferase(Phosphotransferase) domain 1"/>
    <property type="match status" value="1"/>
</dbReference>
<dbReference type="InterPro" id="IPR011989">
    <property type="entry name" value="ARM-like"/>
</dbReference>
<dbReference type="InterPro" id="IPR016024">
    <property type="entry name" value="ARM-type_fold"/>
</dbReference>
<dbReference type="InterPro" id="IPR000225">
    <property type="entry name" value="Armadillo"/>
</dbReference>
<dbReference type="InterPro" id="IPR011009">
    <property type="entry name" value="Kinase-like_dom_sf"/>
</dbReference>
<dbReference type="InterPro" id="IPR000719">
    <property type="entry name" value="Prot_kinase_dom"/>
</dbReference>
<dbReference type="InterPro" id="IPR017441">
    <property type="entry name" value="Protein_kinase_ATP_BS"/>
</dbReference>
<dbReference type="InterPro" id="IPR008271">
    <property type="entry name" value="Ser/Thr_kinase_AS"/>
</dbReference>
<dbReference type="PANTHER" id="PTHR22983">
    <property type="entry name" value="PROTEIN KINASE RELATED"/>
    <property type="match status" value="1"/>
</dbReference>
<dbReference type="PANTHER" id="PTHR22983:SF6">
    <property type="entry name" value="SERINE_THREONINE-PROTEIN KINASE 36"/>
    <property type="match status" value="1"/>
</dbReference>
<dbReference type="Pfam" id="PF00514">
    <property type="entry name" value="Arm"/>
    <property type="match status" value="1"/>
</dbReference>
<dbReference type="Pfam" id="PF00069">
    <property type="entry name" value="Pkinase"/>
    <property type="match status" value="1"/>
</dbReference>
<dbReference type="SMART" id="SM00185">
    <property type="entry name" value="ARM"/>
    <property type="match status" value="4"/>
</dbReference>
<dbReference type="SMART" id="SM00220">
    <property type="entry name" value="S_TKc"/>
    <property type="match status" value="1"/>
</dbReference>
<dbReference type="SUPFAM" id="SSF48371">
    <property type="entry name" value="ARM repeat"/>
    <property type="match status" value="2"/>
</dbReference>
<dbReference type="SUPFAM" id="SSF56112">
    <property type="entry name" value="Protein kinase-like (PK-like)"/>
    <property type="match status" value="1"/>
</dbReference>
<dbReference type="PROSITE" id="PS00107">
    <property type="entry name" value="PROTEIN_KINASE_ATP"/>
    <property type="match status" value="1"/>
</dbReference>
<dbReference type="PROSITE" id="PS50011">
    <property type="entry name" value="PROTEIN_KINASE_DOM"/>
    <property type="match status" value="1"/>
</dbReference>
<dbReference type="PROSITE" id="PS00108">
    <property type="entry name" value="PROTEIN_KINASE_ST"/>
    <property type="match status" value="1"/>
</dbReference>
<proteinExistence type="evidence at protein level"/>
<feature type="chain" id="PRO_0000419694" description="Serine/threonine-protein kinase TIO">
    <location>
        <begin position="1"/>
        <end position="1322"/>
    </location>
</feature>
<feature type="domain" description="Protein kinase" evidence="1">
    <location>
        <begin position="6"/>
        <end position="256"/>
    </location>
</feature>
<feature type="repeat" description="ARM 1">
    <location>
        <begin position="1056"/>
        <end position="1098"/>
    </location>
</feature>
<feature type="repeat" description="ARM 2">
    <location>
        <begin position="1101"/>
        <end position="1140"/>
    </location>
</feature>
<feature type="repeat" description="ARM 3">
    <location>
        <begin position="1143"/>
        <end position="1182"/>
    </location>
</feature>
<feature type="repeat" description="ARM 4">
    <location>
        <begin position="1183"/>
        <end position="1223"/>
    </location>
</feature>
<feature type="repeat" description="ARM 5">
    <location>
        <begin position="1226"/>
        <end position="1273"/>
    </location>
</feature>
<feature type="repeat" description="ARM 6">
    <location>
        <begin position="1281"/>
        <end position="1320"/>
    </location>
</feature>
<feature type="region of interest" description="Required for the binding to Kinesin-12 members">
    <location>
        <begin position="1000"/>
        <end position="1322"/>
    </location>
</feature>
<feature type="active site" description="Proton acceptor" evidence="1 2">
    <location>
        <position position="127"/>
    </location>
</feature>
<feature type="binding site" evidence="1">
    <location>
        <begin position="12"/>
        <end position="20"/>
    </location>
    <ligand>
        <name>ATP</name>
        <dbReference type="ChEBI" id="CHEBI:30616"/>
    </ligand>
</feature>
<feature type="binding site" evidence="1">
    <location>
        <position position="35"/>
    </location>
    <ligand>
        <name>ATP</name>
        <dbReference type="ChEBI" id="CHEBI:30616"/>
    </ligand>
</feature>
<feature type="mutagenesis site" description="Alters binding to Kinesin-12 members." evidence="4">
    <original>K</original>
    <variation>A</variation>
    <location>
        <position position="35"/>
    </location>
</feature>
<feature type="mutagenesis site" description="Alters binding to Kinesin-12 members; when associated with A-132." evidence="4">
    <original>D</original>
    <variation>A</variation>
    <location>
        <position position="127"/>
    </location>
</feature>
<feature type="mutagenesis site" description="Alters binding to Kinesin-12 members; when associated with A-127." evidence="4">
    <original>N</original>
    <variation>A</variation>
    <location>
        <position position="132"/>
    </location>
</feature>
<feature type="sequence conflict" description="In Ref. 1; AAZ66047." evidence="6" ref="1">
    <original>E</original>
    <variation>K</variation>
    <location>
        <position position="230"/>
    </location>
</feature>
<gene>
    <name type="primary">TIO</name>
    <name type="synonym">FU</name>
    <name type="ordered locus">At1g50240</name>
    <name type="ORF">F14I3.15</name>
</gene>
<keyword id="KW-0067">ATP-binding</keyword>
<keyword id="KW-0963">Cytoplasm</keyword>
<keyword id="KW-0206">Cytoskeleton</keyword>
<keyword id="KW-0418">Kinase</keyword>
<keyword id="KW-0547">Nucleotide-binding</keyword>
<keyword id="KW-1185">Reference proteome</keyword>
<keyword id="KW-0677">Repeat</keyword>
<keyword id="KW-0723">Serine/threonine-protein kinase</keyword>
<keyword id="KW-0808">Transferase</keyword>
<sequence length="1322" mass="145414">MGVEDYHVIELVGEGSFGRVYKGRRKYTGQTVAMKFIMKQGKTDKDIHSLRQEIEILRKLKHENIIEMLDSFENAREFCVVTEFAQGELFEILEDDKCLPEEQVQAIAKQLVKALDYLHSNRIIHRDMKPQNILIGAGSVVKLCDFGFARAMSTNTVVLRSIKGTPLYMAPELVKEQPYDRTVDLWSLGVILYELYVGQPPFYTNSVYALIRHIVKDPVKYPDEMSTYFESFLKGLLNKEPHSRLTWPALREHPFVKETQEEVEAREIHTAVVDNKAAWMLKGNGGQQRNEKCDSVTLVEDMSATKGLADVQSDMKSAVKVNSPPTEDFVGFPTQEEIKSSGNPTLDKLENTSRTVKGAQVIGENDKALDLVLLSLERFSKSPDSKRDKDVACSVQSLRIISNLVATRAIVSVGLIEKITCALLDFTDALVGMKSPEFNNIIPKSLSVTKNLVGHVEGNNIHSSYIRHWTKVVEIFIQVVRWEEEGTGRIIYEACSCITTMLSRVAQDLKSSTPDSVSKQILEHANMSRIVDHLCLCLASSGSSLTSGSSQMLAAACEACRAIWILIDTSETFFKNDDVNILPLDALQNRLSQHDIGNSEWGPLSEKLVDTVTRAYLRSKHVQVAVGHCLHQRVEAPLVSAIQLLSRCCLHNGILPSMLCGLPSSLPITTVVSGGEDGTVISEIFSILSYATLSSKDQQTGEKDNFEGRLNNLVFHSCLMLATVAQCLKLTGRNSVLLMLTTSPKKHQHRLSAIANHIASDDKIEASLQNHSASAMLALASILALEKGSSAGSSVSELVVSLIPRATKLCYHLRPMPSNEGEVISHSANYAKWHGLLDGCIGLLESRLKWGGPLAVQQLIASGTPLLLINLLAGKLSNASPEDIKKTSNRIGLSPIGVVWTISSICHCLSGGTTFRQVLVKIETMKLITCLLSDAHIKLVKSWGGPGGGKDGVRETINVIIDLLAFPFVALQSQPGSLSATASVNSGFILNIGSPGVRVCMEDRDLLKAIEEDMDKYIIVLLEVGVPSLILRCLDHLELKDLVRPVAFLAKMVGRPRLAVDLVSKGLLDPNRMKKLLNQSSPREVILDILMIISDLSRMDKAFYKYIGEASVLQPLKEYLTHVDPNIRAKACSALGNMCRHNGYFYSALAEHQIIGLLIDRCADPDKRTQKFACFAIGNAAYHNDTLYEELRRSITQLANVLTTAEEDKTKANAAGALSNLVRNSNKLCEDIVSKGALQTLLRLVADCSTLALNPSKKETASESPLKIALFSLAKMCSNHQICRQFVKSSELFPVIARLKQSPEANIAHYASVIVAKVSGES</sequence>
<comment type="function">
    <text evidence="3 4">Plays a role in conventional modes of cytokinesis in meristems and during male gametogenesis but also acts in nonconventional modes of cytokinesis (cellularization) during female gametogenesis. Constitutes a signaling module in association with Kinesin-12 members that is required to support phragmoplast expansion and cell-plate growth in plant cells.</text>
</comment>
<comment type="catalytic activity">
    <reaction>
        <text>L-seryl-[protein] + ATP = O-phospho-L-seryl-[protein] + ADP + H(+)</text>
        <dbReference type="Rhea" id="RHEA:17989"/>
        <dbReference type="Rhea" id="RHEA-COMP:9863"/>
        <dbReference type="Rhea" id="RHEA-COMP:11604"/>
        <dbReference type="ChEBI" id="CHEBI:15378"/>
        <dbReference type="ChEBI" id="CHEBI:29999"/>
        <dbReference type="ChEBI" id="CHEBI:30616"/>
        <dbReference type="ChEBI" id="CHEBI:83421"/>
        <dbReference type="ChEBI" id="CHEBI:456216"/>
        <dbReference type="EC" id="2.7.11.1"/>
    </reaction>
</comment>
<comment type="catalytic activity">
    <reaction>
        <text>L-threonyl-[protein] + ATP = O-phospho-L-threonyl-[protein] + ADP + H(+)</text>
        <dbReference type="Rhea" id="RHEA:46608"/>
        <dbReference type="Rhea" id="RHEA-COMP:11060"/>
        <dbReference type="Rhea" id="RHEA-COMP:11605"/>
        <dbReference type="ChEBI" id="CHEBI:15378"/>
        <dbReference type="ChEBI" id="CHEBI:30013"/>
        <dbReference type="ChEBI" id="CHEBI:30616"/>
        <dbReference type="ChEBI" id="CHEBI:61977"/>
        <dbReference type="ChEBI" id="CHEBI:456216"/>
        <dbReference type="EC" id="2.7.11.1"/>
    </reaction>
</comment>
<comment type="subunit">
    <text evidence="4 5">Interacts with Kinesin-12 members KIN12A/PAKRP1 and KIN12B/PAKRP1L (PubMed:22709276). Interacts with KIN7B/NACK2 (PubMed:24146312).</text>
</comment>
<comment type="interaction">
    <interactant intactId="EBI-6280536">
        <id>Q2QAV0</id>
    </interactant>
    <interactant intactId="EBI-6280428">
        <id>Q9LDN0</id>
        <label>KIN12A</label>
    </interactant>
    <organismsDiffer>false</organismsDiffer>
    <experiments>3</experiments>
</comment>
<comment type="subcellular location">
    <subcellularLocation>
        <location evidence="3">Cytoplasm</location>
        <location evidence="3">Cytoskeleton</location>
        <location evidence="3">Phragmoplast</location>
    </subcellularLocation>
    <text>Localized to the midline of the nascent phragmoplast and remains associated with the expanding phragmoplast ring.</text>
</comment>
<comment type="tissue specificity">
    <text evidence="3">Ubiquitous.</text>
</comment>
<comment type="domain">
    <text evidence="4">The ARM-repeat containing C-terminal region is required for the binding to the Kinesin-12 members.</text>
</comment>
<comment type="disruption phenotype">
    <text evidence="3 4">Cytokinesis-defective leading to aberrant pollen and embryo sacs.</text>
</comment>
<comment type="similarity">
    <text evidence="1">Belongs to the protein kinase superfamily. Ser/Thr protein kinase family.</text>
</comment>
<comment type="sequence caution" evidence="6">
    <conflict type="erroneous gene model prediction">
        <sequence resource="EMBL-CDS" id="AAD50043"/>
    </conflict>
</comment>
<accession>Q2QAV0</accession>
<accession>Q2QB51</accession>
<accession>Q9SX42</accession>